<feature type="chain" id="PRO_0000410879" description="Potassium channel KAT3">
    <location>
        <begin position="1"/>
        <end position="502"/>
    </location>
</feature>
<feature type="topological domain" description="Cytoplasmic" evidence="2">
    <location>
        <begin position="1"/>
        <end position="67"/>
    </location>
</feature>
<feature type="transmembrane region" description="Helical; Name=Segment S1" evidence="2">
    <location>
        <begin position="68"/>
        <end position="88"/>
    </location>
</feature>
<feature type="topological domain" description="Extracellular" evidence="2">
    <location>
        <begin position="89"/>
        <end position="95"/>
    </location>
</feature>
<feature type="transmembrane region" description="Helical; Name=Segment S2" evidence="2">
    <location>
        <begin position="96"/>
        <end position="116"/>
    </location>
</feature>
<feature type="topological domain" description="Cytoplasmic" evidence="2">
    <location>
        <begin position="117"/>
        <end position="138"/>
    </location>
</feature>
<feature type="transmembrane region" description="Helical; Name=Segment S3" evidence="2">
    <location>
        <begin position="139"/>
        <end position="159"/>
    </location>
</feature>
<feature type="topological domain" description="Extracellular" evidence="2">
    <location>
        <begin position="160"/>
        <end position="169"/>
    </location>
</feature>
<feature type="transmembrane region" description="Helical; Voltage-sensor; Name=Segment S4" evidence="2">
    <location>
        <begin position="170"/>
        <end position="190"/>
    </location>
</feature>
<feature type="topological domain" description="Cytoplasmic" evidence="2">
    <location>
        <begin position="191"/>
        <end position="204"/>
    </location>
</feature>
<feature type="transmembrane region" description="Helical; Name=Segment S5" evidence="2">
    <location>
        <begin position="205"/>
        <end position="225"/>
    </location>
</feature>
<feature type="topological domain" description="Extracellular" evidence="2">
    <location>
        <begin position="226"/>
        <end position="252"/>
    </location>
</feature>
<feature type="intramembrane region" description="Pore-forming; Name=Segment H5" evidence="2">
    <location>
        <begin position="253"/>
        <end position="272"/>
    </location>
</feature>
<feature type="topological domain" description="Extracellular" evidence="2">
    <location>
        <begin position="273"/>
        <end position="276"/>
    </location>
</feature>
<feature type="transmembrane region" description="Helical; Name=Segment S6" evidence="2">
    <location>
        <begin position="277"/>
        <end position="297"/>
    </location>
</feature>
<feature type="topological domain" description="Cytoplasmic" evidence="2">
    <location>
        <begin position="298"/>
        <end position="502"/>
    </location>
</feature>
<feature type="binding site">
    <location>
        <begin position="381"/>
        <end position="500"/>
    </location>
    <ligand>
        <name>a nucleoside 3',5'-cyclic phosphate</name>
        <dbReference type="ChEBI" id="CHEBI:58464"/>
    </ligand>
</feature>
<feature type="sequence conflict" description="In Ref. 5; AK100739." evidence="3" ref="5">
    <original>K</original>
    <variation>E</variation>
    <location>
        <position position="467"/>
    </location>
</feature>
<sequence>MPRSSRMNLWPHCFPCFDDGDRSGNRFSTVCNFPDDLLPSLGATAHQPPKLRKYLVSPYDPRYKVWETFLIILVVYSAWICPLEFAFLRYLPSAPFVVDDVVNGFFAVDIMLTFFVPFVDKKSYLLVNDPKKIAVRYLSSWFVFDVCSTVPFHSISLLFNEHGHDLGFKFLNVLRLWRLRRVSSMFARLEKDIRFNYAVIRCTKLISVTLFAIHCAGCINYLIADRYPDPRRTWIGAVMPNFREDGLWIRYVTAMYWSITTLTTTGYGDLHAENAREMLFGICYMLFNLWLTAYLIGNMTNLVVHSTSRTRDFRDVVQAASEFAARNQLPQQIEEQMLNHICLRYKTDGLKQQETLDVLPKAMRSSISHYLFFRVVQGAYLFKGVSSRFIQQLVTEMQAEYFAPKEDIILQNDSPSDLYLLVSGAVDILVFLDGTEQVYRRAAEGELLGEIGVLCNKPQSFTFRTTKLSQILRISRTKLLGIIQENREDGDIIRSNLQQVNV</sequence>
<evidence type="ECO:0000250" key="1"/>
<evidence type="ECO:0000255" key="2"/>
<evidence type="ECO:0000305" key="3"/>
<name>KAT3_ORYSJ</name>
<reference key="1">
    <citation type="journal article" date="2002" name="Nature">
        <title>The genome sequence and structure of rice chromosome 1.</title>
        <authorList>
            <person name="Sasaki T."/>
            <person name="Matsumoto T."/>
            <person name="Yamamoto K."/>
            <person name="Sakata K."/>
            <person name="Baba T."/>
            <person name="Katayose Y."/>
            <person name="Wu J."/>
            <person name="Niimura Y."/>
            <person name="Cheng Z."/>
            <person name="Nagamura Y."/>
            <person name="Antonio B.A."/>
            <person name="Kanamori H."/>
            <person name="Hosokawa S."/>
            <person name="Masukawa M."/>
            <person name="Arikawa K."/>
            <person name="Chiden Y."/>
            <person name="Hayashi M."/>
            <person name="Okamoto M."/>
            <person name="Ando T."/>
            <person name="Aoki H."/>
            <person name="Arita K."/>
            <person name="Hamada M."/>
            <person name="Harada C."/>
            <person name="Hijishita S."/>
            <person name="Honda M."/>
            <person name="Ichikawa Y."/>
            <person name="Idonuma A."/>
            <person name="Iijima M."/>
            <person name="Ikeda M."/>
            <person name="Ikeno M."/>
            <person name="Ito S."/>
            <person name="Ito T."/>
            <person name="Ito Y."/>
            <person name="Ito Y."/>
            <person name="Iwabuchi A."/>
            <person name="Kamiya K."/>
            <person name="Karasawa W."/>
            <person name="Katagiri S."/>
            <person name="Kikuta A."/>
            <person name="Kobayashi N."/>
            <person name="Kono I."/>
            <person name="Machita K."/>
            <person name="Maehara T."/>
            <person name="Mizuno H."/>
            <person name="Mizubayashi T."/>
            <person name="Mukai Y."/>
            <person name="Nagasaki H."/>
            <person name="Nakashima M."/>
            <person name="Nakama Y."/>
            <person name="Nakamichi Y."/>
            <person name="Nakamura M."/>
            <person name="Namiki N."/>
            <person name="Negishi M."/>
            <person name="Ohta I."/>
            <person name="Ono N."/>
            <person name="Saji S."/>
            <person name="Sakai K."/>
            <person name="Shibata M."/>
            <person name="Shimokawa T."/>
            <person name="Shomura A."/>
            <person name="Song J."/>
            <person name="Takazaki Y."/>
            <person name="Terasawa K."/>
            <person name="Tsuji K."/>
            <person name="Waki K."/>
            <person name="Yamagata H."/>
            <person name="Yamane H."/>
            <person name="Yoshiki S."/>
            <person name="Yoshihara R."/>
            <person name="Yukawa K."/>
            <person name="Zhong H."/>
            <person name="Iwama H."/>
            <person name="Endo T."/>
            <person name="Ito H."/>
            <person name="Hahn J.H."/>
            <person name="Kim H.-I."/>
            <person name="Eun M.-Y."/>
            <person name="Yano M."/>
            <person name="Jiang J."/>
            <person name="Gojobori T."/>
        </authorList>
    </citation>
    <scope>NUCLEOTIDE SEQUENCE [LARGE SCALE GENOMIC DNA]</scope>
    <source>
        <strain>cv. Nipponbare</strain>
    </source>
</reference>
<reference key="2">
    <citation type="journal article" date="2005" name="Nature">
        <title>The map-based sequence of the rice genome.</title>
        <authorList>
            <consortium name="International rice genome sequencing project (IRGSP)"/>
        </authorList>
    </citation>
    <scope>NUCLEOTIDE SEQUENCE [LARGE SCALE GENOMIC DNA]</scope>
    <source>
        <strain>cv. Nipponbare</strain>
    </source>
</reference>
<reference key="3">
    <citation type="journal article" date="2008" name="Nucleic Acids Res.">
        <title>The rice annotation project database (RAP-DB): 2008 update.</title>
        <authorList>
            <consortium name="The rice annotation project (RAP)"/>
        </authorList>
    </citation>
    <scope>GENOME REANNOTATION</scope>
    <source>
        <strain>cv. Nipponbare</strain>
    </source>
</reference>
<reference key="4">
    <citation type="journal article" date="2013" name="Rice">
        <title>Improvement of the Oryza sativa Nipponbare reference genome using next generation sequence and optical map data.</title>
        <authorList>
            <person name="Kawahara Y."/>
            <person name="de la Bastide M."/>
            <person name="Hamilton J.P."/>
            <person name="Kanamori H."/>
            <person name="McCombie W.R."/>
            <person name="Ouyang S."/>
            <person name="Schwartz D.C."/>
            <person name="Tanaka T."/>
            <person name="Wu J."/>
            <person name="Zhou S."/>
            <person name="Childs K.L."/>
            <person name="Davidson R.M."/>
            <person name="Lin H."/>
            <person name="Quesada-Ocampo L."/>
            <person name="Vaillancourt B."/>
            <person name="Sakai H."/>
            <person name="Lee S.S."/>
            <person name="Kim J."/>
            <person name="Numa H."/>
            <person name="Itoh T."/>
            <person name="Buell C.R."/>
            <person name="Matsumoto T."/>
        </authorList>
    </citation>
    <scope>GENOME REANNOTATION</scope>
    <source>
        <strain>cv. Nipponbare</strain>
    </source>
</reference>
<reference key="5">
    <citation type="journal article" date="2003" name="Science">
        <title>Collection, mapping, and annotation of over 28,000 cDNA clones from japonica rice.</title>
        <authorList>
            <consortium name="The rice full-length cDNA consortium"/>
        </authorList>
    </citation>
    <scope>NUCLEOTIDE SEQUENCE [LARGE SCALE MRNA]</scope>
    <source>
        <strain>cv. Nipponbare</strain>
    </source>
</reference>
<gene>
    <name type="ordered locus">Os01g0756700</name>
    <name type="ordered locus">LOC_Os01g55200</name>
    <name type="ORF">OJ1414_E05.9</name>
</gene>
<comment type="function">
    <text evidence="1">Probable inward-rectifying potassium channel. Assuming opened or closed conformations in response to the voltage difference across the membrane, the channel is activated by hyperpolarization (By similarity).</text>
</comment>
<comment type="subcellular location">
    <subcellularLocation>
        <location evidence="3">Membrane</location>
        <topology evidence="3">Multi-pass membrane protein</topology>
    </subcellularLocation>
</comment>
<comment type="domain">
    <text evidence="1">The segment S4 is probably the voltage-sensor and is characterized by a series of positively charged amino acids. The pore-forming region H5 is enclosed by the transmembrane segments S5 and S6 in the Shaker-type (1P/6TM) and contains the GYGD signature motif which seems to be involved in potassium selectivity (By similarity).</text>
</comment>
<comment type="similarity">
    <text evidence="3">Belongs to the potassium channel family. Plant (TC 1.A.1.4) subfamily.</text>
</comment>
<accession>Q5JM04</accession>
<accession>A0A0P0V8B7</accession>
<dbReference type="EMBL" id="AP003375">
    <property type="protein sequence ID" value="BAD87503.1"/>
    <property type="molecule type" value="Genomic_DNA"/>
</dbReference>
<dbReference type="EMBL" id="AP008207">
    <property type="protein sequence ID" value="BAF06204.1"/>
    <property type="molecule type" value="Genomic_DNA"/>
</dbReference>
<dbReference type="EMBL" id="AP014957">
    <property type="protein sequence ID" value="BAS74411.1"/>
    <property type="molecule type" value="Genomic_DNA"/>
</dbReference>
<dbReference type="EMBL" id="AK100739">
    <property type="status" value="NOT_ANNOTATED_CDS"/>
    <property type="molecule type" value="mRNA"/>
</dbReference>
<dbReference type="SMR" id="Q5JM04"/>
<dbReference type="FunCoup" id="Q5JM04">
    <property type="interactions" value="936"/>
</dbReference>
<dbReference type="STRING" id="39947.Q5JM04"/>
<dbReference type="PaxDb" id="39947-Q5JM04"/>
<dbReference type="EnsemblPlants" id="Os01t0756700-01">
    <property type="protein sequence ID" value="Os01t0756700-01"/>
    <property type="gene ID" value="Os01g0756700"/>
</dbReference>
<dbReference type="GeneID" id="4325143"/>
<dbReference type="Gramene" id="Os01t0756700-01">
    <property type="protein sequence ID" value="Os01t0756700-01"/>
    <property type="gene ID" value="Os01g0756700"/>
</dbReference>
<dbReference type="KEGG" id="dosa:Os01g0756700"/>
<dbReference type="KEGG" id="osa:4325143"/>
<dbReference type="eggNOG" id="KOG0498">
    <property type="taxonomic scope" value="Eukaryota"/>
</dbReference>
<dbReference type="HOGENOM" id="CLU_005746_8_2_1"/>
<dbReference type="InParanoid" id="Q5JM04"/>
<dbReference type="OMA" id="ECEPQTR"/>
<dbReference type="OrthoDB" id="426293at2759"/>
<dbReference type="Proteomes" id="UP000000763">
    <property type="component" value="Chromosome 1"/>
</dbReference>
<dbReference type="Proteomes" id="UP000059680">
    <property type="component" value="Chromosome 1"/>
</dbReference>
<dbReference type="GO" id="GO:0034702">
    <property type="term" value="C:monoatomic ion channel complex"/>
    <property type="evidence" value="ECO:0007669"/>
    <property type="project" value="UniProtKB-KW"/>
</dbReference>
<dbReference type="GO" id="GO:0005249">
    <property type="term" value="F:voltage-gated potassium channel activity"/>
    <property type="evidence" value="ECO:0007669"/>
    <property type="project" value="InterPro"/>
</dbReference>
<dbReference type="CDD" id="cd00038">
    <property type="entry name" value="CAP_ED"/>
    <property type="match status" value="1"/>
</dbReference>
<dbReference type="FunFam" id="2.60.120.10:FF:000074">
    <property type="entry name" value="Potassium channel KAT2"/>
    <property type="match status" value="1"/>
</dbReference>
<dbReference type="FunFam" id="1.10.287.70:FF:000123">
    <property type="entry name" value="Potassium channel KAT3"/>
    <property type="match status" value="1"/>
</dbReference>
<dbReference type="Gene3D" id="1.10.287.70">
    <property type="match status" value="1"/>
</dbReference>
<dbReference type="Gene3D" id="1.10.287.630">
    <property type="entry name" value="Helix hairpin bin"/>
    <property type="match status" value="1"/>
</dbReference>
<dbReference type="Gene3D" id="2.60.120.10">
    <property type="entry name" value="Jelly Rolls"/>
    <property type="match status" value="1"/>
</dbReference>
<dbReference type="InterPro" id="IPR000595">
    <property type="entry name" value="cNMP-bd_dom"/>
</dbReference>
<dbReference type="InterPro" id="IPR018490">
    <property type="entry name" value="cNMP-bd_dom_sf"/>
</dbReference>
<dbReference type="InterPro" id="IPR005821">
    <property type="entry name" value="Ion_trans_dom"/>
</dbReference>
<dbReference type="InterPro" id="IPR003938">
    <property type="entry name" value="K_chnl_volt-dep_EAG/ELK/ERG"/>
</dbReference>
<dbReference type="InterPro" id="IPR045319">
    <property type="entry name" value="KAT/AKT"/>
</dbReference>
<dbReference type="InterPro" id="IPR014710">
    <property type="entry name" value="RmlC-like_jellyroll"/>
</dbReference>
<dbReference type="PANTHER" id="PTHR45743">
    <property type="entry name" value="POTASSIUM CHANNEL AKT1"/>
    <property type="match status" value="1"/>
</dbReference>
<dbReference type="PANTHER" id="PTHR45743:SF38">
    <property type="entry name" value="POTASSIUM CHANNEL KAT3"/>
    <property type="match status" value="1"/>
</dbReference>
<dbReference type="Pfam" id="PF00027">
    <property type="entry name" value="cNMP_binding"/>
    <property type="match status" value="1"/>
</dbReference>
<dbReference type="Pfam" id="PF00520">
    <property type="entry name" value="Ion_trans"/>
    <property type="match status" value="1"/>
</dbReference>
<dbReference type="PRINTS" id="PR01463">
    <property type="entry name" value="EAGCHANLFMLY"/>
</dbReference>
<dbReference type="SMART" id="SM00100">
    <property type="entry name" value="cNMP"/>
    <property type="match status" value="1"/>
</dbReference>
<dbReference type="SUPFAM" id="SSF51206">
    <property type="entry name" value="cAMP-binding domain-like"/>
    <property type="match status" value="1"/>
</dbReference>
<dbReference type="SUPFAM" id="SSF81324">
    <property type="entry name" value="Voltage-gated potassium channels"/>
    <property type="match status" value="1"/>
</dbReference>
<dbReference type="PROSITE" id="PS50042">
    <property type="entry name" value="CNMP_BINDING_3"/>
    <property type="match status" value="1"/>
</dbReference>
<protein>
    <recommendedName>
        <fullName>Potassium channel KAT3</fullName>
    </recommendedName>
</protein>
<keyword id="KW-0407">Ion channel</keyword>
<keyword id="KW-0406">Ion transport</keyword>
<keyword id="KW-0472">Membrane</keyword>
<keyword id="KW-0630">Potassium</keyword>
<keyword id="KW-0631">Potassium channel</keyword>
<keyword id="KW-0633">Potassium transport</keyword>
<keyword id="KW-1185">Reference proteome</keyword>
<keyword id="KW-0812">Transmembrane</keyword>
<keyword id="KW-1133">Transmembrane helix</keyword>
<keyword id="KW-0813">Transport</keyword>
<keyword id="KW-0851">Voltage-gated channel</keyword>
<proteinExistence type="evidence at transcript level"/>
<organism>
    <name type="scientific">Oryza sativa subsp. japonica</name>
    <name type="common">Rice</name>
    <dbReference type="NCBI Taxonomy" id="39947"/>
    <lineage>
        <taxon>Eukaryota</taxon>
        <taxon>Viridiplantae</taxon>
        <taxon>Streptophyta</taxon>
        <taxon>Embryophyta</taxon>
        <taxon>Tracheophyta</taxon>
        <taxon>Spermatophyta</taxon>
        <taxon>Magnoliopsida</taxon>
        <taxon>Liliopsida</taxon>
        <taxon>Poales</taxon>
        <taxon>Poaceae</taxon>
        <taxon>BOP clade</taxon>
        <taxon>Oryzoideae</taxon>
        <taxon>Oryzeae</taxon>
        <taxon>Oryzinae</taxon>
        <taxon>Oryza</taxon>
        <taxon>Oryza sativa</taxon>
    </lineage>
</organism>